<name>PDXY_YERPS</name>
<accession>Q66A50</accession>
<protein>
    <recommendedName>
        <fullName evidence="1">Pyridoxal kinase PdxY</fullName>
        <shortName evidence="1">PL kinase</shortName>
        <ecNumber evidence="1">2.7.1.35</ecNumber>
    </recommendedName>
</protein>
<dbReference type="EC" id="2.7.1.35" evidence="1"/>
<dbReference type="EMBL" id="BX936398">
    <property type="protein sequence ID" value="CAH21520.1"/>
    <property type="molecule type" value="Genomic_DNA"/>
</dbReference>
<dbReference type="RefSeq" id="WP_011192523.1">
    <property type="nucleotide sequence ID" value="NC_006155.1"/>
</dbReference>
<dbReference type="SMR" id="Q66A50"/>
<dbReference type="GeneID" id="49785721"/>
<dbReference type="KEGG" id="ypo:BZ17_178"/>
<dbReference type="KEGG" id="yps:YPTB2282"/>
<dbReference type="PATRIC" id="fig|273123.14.peg.185"/>
<dbReference type="UniPathway" id="UPA01068">
    <property type="reaction ID" value="UER00298"/>
</dbReference>
<dbReference type="Proteomes" id="UP000001011">
    <property type="component" value="Chromosome"/>
</dbReference>
<dbReference type="GO" id="GO:0005829">
    <property type="term" value="C:cytosol"/>
    <property type="evidence" value="ECO:0007669"/>
    <property type="project" value="TreeGrafter"/>
</dbReference>
<dbReference type="GO" id="GO:0005524">
    <property type="term" value="F:ATP binding"/>
    <property type="evidence" value="ECO:0007669"/>
    <property type="project" value="UniProtKB-UniRule"/>
</dbReference>
<dbReference type="GO" id="GO:0000287">
    <property type="term" value="F:magnesium ion binding"/>
    <property type="evidence" value="ECO:0007669"/>
    <property type="project" value="UniProtKB-UniRule"/>
</dbReference>
<dbReference type="GO" id="GO:0008478">
    <property type="term" value="F:pyridoxal kinase activity"/>
    <property type="evidence" value="ECO:0007669"/>
    <property type="project" value="UniProtKB-UniRule"/>
</dbReference>
<dbReference type="GO" id="GO:0009443">
    <property type="term" value="P:pyridoxal 5'-phosphate salvage"/>
    <property type="evidence" value="ECO:0007669"/>
    <property type="project" value="UniProtKB-UniRule"/>
</dbReference>
<dbReference type="CDD" id="cd01173">
    <property type="entry name" value="pyridoxal_pyridoxamine_kinase"/>
    <property type="match status" value="1"/>
</dbReference>
<dbReference type="FunFam" id="3.40.1190.20:FF:000008">
    <property type="entry name" value="Pyridoxal kinase PdxY"/>
    <property type="match status" value="1"/>
</dbReference>
<dbReference type="Gene3D" id="3.40.1190.20">
    <property type="match status" value="1"/>
</dbReference>
<dbReference type="HAMAP" id="MF_01639">
    <property type="entry name" value="PdxY"/>
    <property type="match status" value="1"/>
</dbReference>
<dbReference type="InterPro" id="IPR013749">
    <property type="entry name" value="PM/HMP-P_kinase-1"/>
</dbReference>
<dbReference type="InterPro" id="IPR004625">
    <property type="entry name" value="PyrdxlKinase"/>
</dbReference>
<dbReference type="InterPro" id="IPR023685">
    <property type="entry name" value="Pyridoxal_kinase_PdxY"/>
</dbReference>
<dbReference type="InterPro" id="IPR029056">
    <property type="entry name" value="Ribokinase-like"/>
</dbReference>
<dbReference type="NCBIfam" id="NF004398">
    <property type="entry name" value="PRK05756.1"/>
    <property type="match status" value="1"/>
</dbReference>
<dbReference type="NCBIfam" id="TIGR00687">
    <property type="entry name" value="pyridox_kin"/>
    <property type="match status" value="1"/>
</dbReference>
<dbReference type="PANTHER" id="PTHR10534">
    <property type="entry name" value="PYRIDOXAL KINASE"/>
    <property type="match status" value="1"/>
</dbReference>
<dbReference type="PANTHER" id="PTHR10534:SF2">
    <property type="entry name" value="PYRIDOXAL KINASE"/>
    <property type="match status" value="1"/>
</dbReference>
<dbReference type="Pfam" id="PF08543">
    <property type="entry name" value="Phos_pyr_kin"/>
    <property type="match status" value="1"/>
</dbReference>
<dbReference type="SUPFAM" id="SSF53613">
    <property type="entry name" value="Ribokinase-like"/>
    <property type="match status" value="1"/>
</dbReference>
<proteinExistence type="inferred from homology"/>
<organism>
    <name type="scientific">Yersinia pseudotuberculosis serotype I (strain IP32953)</name>
    <dbReference type="NCBI Taxonomy" id="273123"/>
    <lineage>
        <taxon>Bacteria</taxon>
        <taxon>Pseudomonadati</taxon>
        <taxon>Pseudomonadota</taxon>
        <taxon>Gammaproteobacteria</taxon>
        <taxon>Enterobacterales</taxon>
        <taxon>Yersiniaceae</taxon>
        <taxon>Yersinia</taxon>
    </lineage>
</organism>
<reference key="1">
    <citation type="journal article" date="2004" name="Proc. Natl. Acad. Sci. U.S.A.">
        <title>Insights into the evolution of Yersinia pestis through whole-genome comparison with Yersinia pseudotuberculosis.</title>
        <authorList>
            <person name="Chain P.S.G."/>
            <person name="Carniel E."/>
            <person name="Larimer F.W."/>
            <person name="Lamerdin J."/>
            <person name="Stoutland P.O."/>
            <person name="Regala W.M."/>
            <person name="Georgescu A.M."/>
            <person name="Vergez L.M."/>
            <person name="Land M.L."/>
            <person name="Motin V.L."/>
            <person name="Brubaker R.R."/>
            <person name="Fowler J."/>
            <person name="Hinnebusch J."/>
            <person name="Marceau M."/>
            <person name="Medigue C."/>
            <person name="Simonet M."/>
            <person name="Chenal-Francisque V."/>
            <person name="Souza B."/>
            <person name="Dacheux D."/>
            <person name="Elliott J.M."/>
            <person name="Derbise A."/>
            <person name="Hauser L.J."/>
            <person name="Garcia E."/>
        </authorList>
    </citation>
    <scope>NUCLEOTIDE SEQUENCE [LARGE SCALE GENOMIC DNA]</scope>
    <source>
        <strain>IP32953</strain>
    </source>
</reference>
<gene>
    <name evidence="1" type="primary">pdxY</name>
    <name type="ordered locus">YPTB2282</name>
</gene>
<feature type="chain" id="PRO_0000269841" description="Pyridoxal kinase PdxY">
    <location>
        <begin position="1"/>
        <end position="286"/>
    </location>
</feature>
<feature type="binding site" evidence="1">
    <location>
        <position position="9"/>
    </location>
    <ligand>
        <name>substrate</name>
    </ligand>
</feature>
<feature type="binding site" evidence="1">
    <location>
        <begin position="44"/>
        <end position="45"/>
    </location>
    <ligand>
        <name>substrate</name>
    </ligand>
</feature>
<feature type="binding site" evidence="1">
    <location>
        <position position="111"/>
    </location>
    <ligand>
        <name>ATP</name>
        <dbReference type="ChEBI" id="CHEBI:30616"/>
    </ligand>
</feature>
<feature type="binding site" evidence="1">
    <location>
        <position position="143"/>
    </location>
    <ligand>
        <name>ATP</name>
        <dbReference type="ChEBI" id="CHEBI:30616"/>
    </ligand>
</feature>
<feature type="binding site" evidence="1">
    <location>
        <position position="148"/>
    </location>
    <ligand>
        <name>ATP</name>
        <dbReference type="ChEBI" id="CHEBI:30616"/>
    </ligand>
</feature>
<feature type="binding site" evidence="1">
    <location>
        <position position="181"/>
    </location>
    <ligand>
        <name>ATP</name>
        <dbReference type="ChEBI" id="CHEBI:30616"/>
    </ligand>
</feature>
<feature type="binding site" evidence="1">
    <location>
        <begin position="208"/>
        <end position="211"/>
    </location>
    <ligand>
        <name>ATP</name>
        <dbReference type="ChEBI" id="CHEBI:30616"/>
    </ligand>
</feature>
<feature type="binding site" evidence="1">
    <location>
        <position position="223"/>
    </location>
    <ligand>
        <name>substrate</name>
    </ligand>
</feature>
<keyword id="KW-0067">ATP-binding</keyword>
<keyword id="KW-0418">Kinase</keyword>
<keyword id="KW-0460">Magnesium</keyword>
<keyword id="KW-0547">Nucleotide-binding</keyword>
<keyword id="KW-0808">Transferase</keyword>
<comment type="function">
    <text evidence="1">Pyridoxal kinase involved in the salvage pathway of pyridoxal 5'-phosphate (PLP). Catalyzes the phosphorylation of pyridoxal to PLP.</text>
</comment>
<comment type="catalytic activity">
    <reaction evidence="1">
        <text>pyridoxal + ATP = pyridoxal 5'-phosphate + ADP + H(+)</text>
        <dbReference type="Rhea" id="RHEA:10224"/>
        <dbReference type="ChEBI" id="CHEBI:15378"/>
        <dbReference type="ChEBI" id="CHEBI:17310"/>
        <dbReference type="ChEBI" id="CHEBI:30616"/>
        <dbReference type="ChEBI" id="CHEBI:456216"/>
        <dbReference type="ChEBI" id="CHEBI:597326"/>
        <dbReference type="EC" id="2.7.1.35"/>
    </reaction>
</comment>
<comment type="cofactor">
    <cofactor evidence="1">
        <name>Mg(2+)</name>
        <dbReference type="ChEBI" id="CHEBI:18420"/>
    </cofactor>
</comment>
<comment type="pathway">
    <text evidence="1">Cofactor metabolism; pyridoxal 5'-phosphate salvage; pyridoxal 5'-phosphate from pyridoxal: step 1/1.</text>
</comment>
<comment type="subunit">
    <text evidence="1">Homodimer.</text>
</comment>
<comment type="similarity">
    <text evidence="1">Belongs to the pyridoxine kinase family. PdxY subfamily.</text>
</comment>
<evidence type="ECO:0000255" key="1">
    <source>
        <dbReference type="HAMAP-Rule" id="MF_01639"/>
    </source>
</evidence>
<sequence>MKNILSIQSHVVFGHAGNSAAEFPMRRMGVNVWPLNTVQFSNHTQYGHWTGCVMPASHLTDIVQGIADIDRLKDCDAVLSGYIGSPEQGSHILAAVAQVKQANPDAWYFCDPVMGHPEKGCIVAPGVAEFFCNEALPASDMIAPNLLELEQLSGERVENVEQAVQVARSLCARGPKVVLVKHLSRAGYHADCFEMLLVTADDAWHISRPLVDFGKRQPVGVGDLTSGLLLVNLLKGEPLDKALEHVTAAVYEVMLKTQEMGEYELQVVAAQETIVTPICQFTAVRL</sequence>